<accession>Q21WJ5</accession>
<feature type="chain" id="PRO_1000008313" description="Translation initiation factor IF-2">
    <location>
        <begin position="1"/>
        <end position="978"/>
    </location>
</feature>
<feature type="domain" description="tr-type G">
    <location>
        <begin position="478"/>
        <end position="647"/>
    </location>
</feature>
<feature type="region of interest" description="Disordered" evidence="3">
    <location>
        <begin position="107"/>
        <end position="129"/>
    </location>
</feature>
<feature type="region of interest" description="Disordered" evidence="3">
    <location>
        <begin position="146"/>
        <end position="387"/>
    </location>
</feature>
<feature type="region of interest" description="G1" evidence="1">
    <location>
        <begin position="487"/>
        <end position="494"/>
    </location>
</feature>
<feature type="region of interest" description="G2" evidence="1">
    <location>
        <begin position="512"/>
        <end position="516"/>
    </location>
</feature>
<feature type="region of interest" description="G3" evidence="1">
    <location>
        <begin position="533"/>
        <end position="536"/>
    </location>
</feature>
<feature type="region of interest" description="G4" evidence="1">
    <location>
        <begin position="587"/>
        <end position="590"/>
    </location>
</feature>
<feature type="region of interest" description="G5" evidence="1">
    <location>
        <begin position="623"/>
        <end position="625"/>
    </location>
</feature>
<feature type="compositionally biased region" description="Basic and acidic residues" evidence="3">
    <location>
        <begin position="146"/>
        <end position="169"/>
    </location>
</feature>
<feature type="compositionally biased region" description="Low complexity" evidence="3">
    <location>
        <begin position="170"/>
        <end position="186"/>
    </location>
</feature>
<feature type="compositionally biased region" description="Basic and acidic residues" evidence="3">
    <location>
        <begin position="215"/>
        <end position="259"/>
    </location>
</feature>
<feature type="compositionally biased region" description="Low complexity" evidence="3">
    <location>
        <begin position="295"/>
        <end position="326"/>
    </location>
</feature>
<feature type="compositionally biased region" description="Low complexity" evidence="3">
    <location>
        <begin position="349"/>
        <end position="361"/>
    </location>
</feature>
<feature type="compositionally biased region" description="Basic and acidic residues" evidence="3">
    <location>
        <begin position="375"/>
        <end position="386"/>
    </location>
</feature>
<feature type="binding site" evidence="2">
    <location>
        <begin position="487"/>
        <end position="494"/>
    </location>
    <ligand>
        <name>GTP</name>
        <dbReference type="ChEBI" id="CHEBI:37565"/>
    </ligand>
</feature>
<feature type="binding site" evidence="2">
    <location>
        <begin position="533"/>
        <end position="537"/>
    </location>
    <ligand>
        <name>GTP</name>
        <dbReference type="ChEBI" id="CHEBI:37565"/>
    </ligand>
</feature>
<feature type="binding site" evidence="2">
    <location>
        <begin position="587"/>
        <end position="590"/>
    </location>
    <ligand>
        <name>GTP</name>
        <dbReference type="ChEBI" id="CHEBI:37565"/>
    </ligand>
</feature>
<comment type="function">
    <text evidence="2">One of the essential components for the initiation of protein synthesis. Protects formylmethionyl-tRNA from spontaneous hydrolysis and promotes its binding to the 30S ribosomal subunits. Also involved in the hydrolysis of GTP during the formation of the 70S ribosomal complex.</text>
</comment>
<comment type="subcellular location">
    <subcellularLocation>
        <location evidence="2">Cytoplasm</location>
    </subcellularLocation>
</comment>
<comment type="similarity">
    <text evidence="2">Belongs to the TRAFAC class translation factor GTPase superfamily. Classic translation factor GTPase family. IF-2 subfamily.</text>
</comment>
<keyword id="KW-0963">Cytoplasm</keyword>
<keyword id="KW-0342">GTP-binding</keyword>
<keyword id="KW-0396">Initiation factor</keyword>
<keyword id="KW-0547">Nucleotide-binding</keyword>
<keyword id="KW-0648">Protein biosynthesis</keyword>
<keyword id="KW-1185">Reference proteome</keyword>
<proteinExistence type="inferred from homology"/>
<name>IF2_ALBFT</name>
<evidence type="ECO:0000250" key="1"/>
<evidence type="ECO:0000255" key="2">
    <source>
        <dbReference type="HAMAP-Rule" id="MF_00100"/>
    </source>
</evidence>
<evidence type="ECO:0000256" key="3">
    <source>
        <dbReference type="SAM" id="MobiDB-lite"/>
    </source>
</evidence>
<dbReference type="EMBL" id="CP000267">
    <property type="protein sequence ID" value="ABD69858.1"/>
    <property type="molecule type" value="Genomic_DNA"/>
</dbReference>
<dbReference type="RefSeq" id="WP_011464426.1">
    <property type="nucleotide sequence ID" value="NC_007908.1"/>
</dbReference>
<dbReference type="SMR" id="Q21WJ5"/>
<dbReference type="STRING" id="338969.Rfer_2134"/>
<dbReference type="KEGG" id="rfr:Rfer_2134"/>
<dbReference type="eggNOG" id="COG0532">
    <property type="taxonomic scope" value="Bacteria"/>
</dbReference>
<dbReference type="HOGENOM" id="CLU_006301_6_0_4"/>
<dbReference type="OrthoDB" id="9811804at2"/>
<dbReference type="Proteomes" id="UP000008332">
    <property type="component" value="Chromosome"/>
</dbReference>
<dbReference type="GO" id="GO:0005829">
    <property type="term" value="C:cytosol"/>
    <property type="evidence" value="ECO:0007669"/>
    <property type="project" value="TreeGrafter"/>
</dbReference>
<dbReference type="GO" id="GO:0005525">
    <property type="term" value="F:GTP binding"/>
    <property type="evidence" value="ECO:0007669"/>
    <property type="project" value="UniProtKB-KW"/>
</dbReference>
<dbReference type="GO" id="GO:0003924">
    <property type="term" value="F:GTPase activity"/>
    <property type="evidence" value="ECO:0007669"/>
    <property type="project" value="UniProtKB-UniRule"/>
</dbReference>
<dbReference type="GO" id="GO:0003743">
    <property type="term" value="F:translation initiation factor activity"/>
    <property type="evidence" value="ECO:0007669"/>
    <property type="project" value="UniProtKB-UniRule"/>
</dbReference>
<dbReference type="CDD" id="cd01887">
    <property type="entry name" value="IF2_eIF5B"/>
    <property type="match status" value="1"/>
</dbReference>
<dbReference type="CDD" id="cd03702">
    <property type="entry name" value="IF2_mtIF2_II"/>
    <property type="match status" value="1"/>
</dbReference>
<dbReference type="CDD" id="cd03692">
    <property type="entry name" value="mtIF2_IVc"/>
    <property type="match status" value="1"/>
</dbReference>
<dbReference type="FunFam" id="2.40.30.10:FF:000007">
    <property type="entry name" value="Translation initiation factor IF-2"/>
    <property type="match status" value="1"/>
</dbReference>
<dbReference type="FunFam" id="2.40.30.10:FF:000008">
    <property type="entry name" value="Translation initiation factor IF-2"/>
    <property type="match status" value="1"/>
</dbReference>
<dbReference type="FunFam" id="3.40.50.10050:FF:000001">
    <property type="entry name" value="Translation initiation factor IF-2"/>
    <property type="match status" value="1"/>
</dbReference>
<dbReference type="FunFam" id="3.40.50.300:FF:000019">
    <property type="entry name" value="Translation initiation factor IF-2"/>
    <property type="match status" value="1"/>
</dbReference>
<dbReference type="Gene3D" id="3.40.50.300">
    <property type="entry name" value="P-loop containing nucleotide triphosphate hydrolases"/>
    <property type="match status" value="1"/>
</dbReference>
<dbReference type="Gene3D" id="3.30.56.50">
    <property type="entry name" value="Putative DNA-binding domain, N-terminal subdomain of bacterial translation initiation factor IF2"/>
    <property type="match status" value="1"/>
</dbReference>
<dbReference type="Gene3D" id="2.40.30.10">
    <property type="entry name" value="Translation factors"/>
    <property type="match status" value="2"/>
</dbReference>
<dbReference type="Gene3D" id="3.40.50.10050">
    <property type="entry name" value="Translation initiation factor IF- 2, domain 3"/>
    <property type="match status" value="1"/>
</dbReference>
<dbReference type="HAMAP" id="MF_00100_B">
    <property type="entry name" value="IF_2_B"/>
    <property type="match status" value="1"/>
</dbReference>
<dbReference type="InterPro" id="IPR009061">
    <property type="entry name" value="DNA-bd_dom_put_sf"/>
</dbReference>
<dbReference type="InterPro" id="IPR053905">
    <property type="entry name" value="EF-G-like_DII"/>
</dbReference>
<dbReference type="InterPro" id="IPR013575">
    <property type="entry name" value="IF2_assoc_dom_bac"/>
</dbReference>
<dbReference type="InterPro" id="IPR044145">
    <property type="entry name" value="IF2_II"/>
</dbReference>
<dbReference type="InterPro" id="IPR006847">
    <property type="entry name" value="IF2_N"/>
</dbReference>
<dbReference type="InterPro" id="IPR027417">
    <property type="entry name" value="P-loop_NTPase"/>
</dbReference>
<dbReference type="InterPro" id="IPR005225">
    <property type="entry name" value="Small_GTP-bd"/>
</dbReference>
<dbReference type="InterPro" id="IPR000795">
    <property type="entry name" value="T_Tr_GTP-bd_dom"/>
</dbReference>
<dbReference type="InterPro" id="IPR000178">
    <property type="entry name" value="TF_IF2_bacterial-like"/>
</dbReference>
<dbReference type="InterPro" id="IPR015760">
    <property type="entry name" value="TIF_IF2"/>
</dbReference>
<dbReference type="InterPro" id="IPR023115">
    <property type="entry name" value="TIF_IF2_dom3"/>
</dbReference>
<dbReference type="InterPro" id="IPR036925">
    <property type="entry name" value="TIF_IF2_dom3_sf"/>
</dbReference>
<dbReference type="InterPro" id="IPR009000">
    <property type="entry name" value="Transl_B-barrel_sf"/>
</dbReference>
<dbReference type="NCBIfam" id="TIGR00487">
    <property type="entry name" value="IF-2"/>
    <property type="match status" value="1"/>
</dbReference>
<dbReference type="NCBIfam" id="TIGR00231">
    <property type="entry name" value="small_GTP"/>
    <property type="match status" value="1"/>
</dbReference>
<dbReference type="PANTHER" id="PTHR43381:SF5">
    <property type="entry name" value="TR-TYPE G DOMAIN-CONTAINING PROTEIN"/>
    <property type="match status" value="1"/>
</dbReference>
<dbReference type="PANTHER" id="PTHR43381">
    <property type="entry name" value="TRANSLATION INITIATION FACTOR IF-2-RELATED"/>
    <property type="match status" value="1"/>
</dbReference>
<dbReference type="Pfam" id="PF22042">
    <property type="entry name" value="EF-G_D2"/>
    <property type="match status" value="1"/>
</dbReference>
<dbReference type="Pfam" id="PF00009">
    <property type="entry name" value="GTP_EFTU"/>
    <property type="match status" value="1"/>
</dbReference>
<dbReference type="Pfam" id="PF11987">
    <property type="entry name" value="IF-2"/>
    <property type="match status" value="1"/>
</dbReference>
<dbReference type="Pfam" id="PF08364">
    <property type="entry name" value="IF2_assoc"/>
    <property type="match status" value="1"/>
</dbReference>
<dbReference type="Pfam" id="PF04760">
    <property type="entry name" value="IF2_N"/>
    <property type="match status" value="2"/>
</dbReference>
<dbReference type="SUPFAM" id="SSF52156">
    <property type="entry name" value="Initiation factor IF2/eIF5b, domain 3"/>
    <property type="match status" value="1"/>
</dbReference>
<dbReference type="SUPFAM" id="SSF52540">
    <property type="entry name" value="P-loop containing nucleoside triphosphate hydrolases"/>
    <property type="match status" value="1"/>
</dbReference>
<dbReference type="SUPFAM" id="SSF46955">
    <property type="entry name" value="Putative DNA-binding domain"/>
    <property type="match status" value="1"/>
</dbReference>
<dbReference type="SUPFAM" id="SSF50447">
    <property type="entry name" value="Translation proteins"/>
    <property type="match status" value="2"/>
</dbReference>
<dbReference type="PROSITE" id="PS51722">
    <property type="entry name" value="G_TR_2"/>
    <property type="match status" value="1"/>
</dbReference>
<dbReference type="PROSITE" id="PS01176">
    <property type="entry name" value="IF2"/>
    <property type="match status" value="1"/>
</dbReference>
<gene>
    <name evidence="2" type="primary">infB</name>
    <name type="ordered locus">Rfer_2134</name>
</gene>
<sequence length="978" mass="105183">MFSTTVAEFANELKKSTATLLEQLKSAGVAKTAASDKLNDADKQRLLSYLQSTHGAAGAERKKITLVKKSTTEIKQADASGKARTIQVEVRKKRTFIRRDDGVEVSAEAPALETEQEVEAAPQVDNLELARREEEARRQAELIRRQEEELSERRRQREEQEARSREASEKAAAVAAEAAEAAAAQALKKKSKPVAPEQPAPNPTEIETAKVLAAAEKEQHLAKEKGLAREKELAESKARAAEDVVRAADLGDRRRKAESEAAAIRLMMSSPAKKAPPPPKKPEEVKPAMKGTLHKPAAGAVPAKPAKPGAPGAPGAPAAGAAAGAGKEVKSAKLSSSWAGDPAKKKGIPTRGATAAPGAGRSTNWRAPARGGRRGSSDRDRDDHRVQAAPVEQRVIEVHVPETITVAELAHKMAVKASEVIKHLMKLGQMVTINQPLDQDTAMILVEEMGHKAIVAALDDPEAFTVDEVSQQQSESLPRAPVVTVMGHVDHGKTSLLDYIRRAKVATGEAGGITQHIGAYHVETDRGMISFLDTPGHEAFTAMRARGAKATDIVILVVAADDGVMPQTKEAIKHARAAGVPIVVAINKIDKPDANPERVKNELVVEEVVPEEFGGDSPFVPVSAKTGQGIDALLEQVLLQAEVLELKAPVDAMAKGLVIEAQLDKGRGPVATVLVQSGTLKTGDIVLAGSTYGRVRAMLDENGRTIKTAGPSIPVEIQGLTEVPQAGDEFMVMADERRAREIATYRAGKFRHTKLAKQQAAKLENMFTDMAAGEVKMVPIIIKADVQGSQEALAQSLLKLSTDEVKVQLVYTAVGAISESDVNLAIASKAVIIGFNTRADAGARKLAENNGVDIRYYDIIYDAVDELKLAMSGMLTPDKKEEVIGTAEIRQIFKVSKIGSIAGCMVTAGVVRRTARLRLLRDNMVIFTGELDSLKRFKDDVREVREGFDCGLNIKNYNDIQEGDVLEFFEIREVARTL</sequence>
<protein>
    <recommendedName>
        <fullName evidence="2">Translation initiation factor IF-2</fullName>
    </recommendedName>
</protein>
<reference key="1">
    <citation type="submission" date="2006-02" db="EMBL/GenBank/DDBJ databases">
        <title>Complete sequence of chromosome of Rhodoferax ferrireducens DSM 15236.</title>
        <authorList>
            <person name="Copeland A."/>
            <person name="Lucas S."/>
            <person name="Lapidus A."/>
            <person name="Barry K."/>
            <person name="Detter J.C."/>
            <person name="Glavina del Rio T."/>
            <person name="Hammon N."/>
            <person name="Israni S."/>
            <person name="Pitluck S."/>
            <person name="Brettin T."/>
            <person name="Bruce D."/>
            <person name="Han C."/>
            <person name="Tapia R."/>
            <person name="Gilna P."/>
            <person name="Kiss H."/>
            <person name="Schmutz J."/>
            <person name="Larimer F."/>
            <person name="Land M."/>
            <person name="Kyrpides N."/>
            <person name="Ivanova N."/>
            <person name="Richardson P."/>
        </authorList>
    </citation>
    <scope>NUCLEOTIDE SEQUENCE [LARGE SCALE GENOMIC DNA]</scope>
    <source>
        <strain>ATCC BAA-621 / DSM 15236 / T118</strain>
    </source>
</reference>
<organism>
    <name type="scientific">Albidiferax ferrireducens (strain ATCC BAA-621 / DSM 15236 / T118)</name>
    <name type="common">Rhodoferax ferrireducens</name>
    <dbReference type="NCBI Taxonomy" id="338969"/>
    <lineage>
        <taxon>Bacteria</taxon>
        <taxon>Pseudomonadati</taxon>
        <taxon>Pseudomonadota</taxon>
        <taxon>Betaproteobacteria</taxon>
        <taxon>Burkholderiales</taxon>
        <taxon>Comamonadaceae</taxon>
        <taxon>Rhodoferax</taxon>
    </lineage>
</organism>